<feature type="chain" id="PRO_0000270164" description="Nucleobase-ascorbate transporter 7">
    <location>
        <begin position="1"/>
        <end position="538"/>
    </location>
</feature>
<feature type="transmembrane region" description="Helical" evidence="1">
    <location>
        <begin position="45"/>
        <end position="65"/>
    </location>
</feature>
<feature type="transmembrane region" description="Helical" evidence="1">
    <location>
        <begin position="81"/>
        <end position="101"/>
    </location>
</feature>
<feature type="transmembrane region" description="Helical" evidence="1">
    <location>
        <begin position="103"/>
        <end position="123"/>
    </location>
</feature>
<feature type="transmembrane region" description="Helical" evidence="1">
    <location>
        <begin position="143"/>
        <end position="163"/>
    </location>
</feature>
<feature type="transmembrane region" description="Helical" evidence="1">
    <location>
        <begin position="166"/>
        <end position="186"/>
    </location>
</feature>
<feature type="transmembrane region" description="Helical" evidence="1">
    <location>
        <begin position="191"/>
        <end position="211"/>
    </location>
</feature>
<feature type="transmembrane region" description="Helical" evidence="1">
    <location>
        <begin position="229"/>
        <end position="249"/>
    </location>
</feature>
<feature type="transmembrane region" description="Helical" evidence="1">
    <location>
        <begin position="295"/>
        <end position="315"/>
    </location>
</feature>
<feature type="transmembrane region" description="Helical" evidence="1">
    <location>
        <begin position="372"/>
        <end position="394"/>
    </location>
</feature>
<feature type="transmembrane region" description="Helical" evidence="1">
    <location>
        <begin position="398"/>
        <end position="420"/>
    </location>
</feature>
<feature type="transmembrane region" description="Helical" evidence="1">
    <location>
        <begin position="432"/>
        <end position="452"/>
    </location>
</feature>
<feature type="transmembrane region" description="Helical" evidence="1">
    <location>
        <begin position="471"/>
        <end position="491"/>
    </location>
</feature>
<feature type="region of interest" description="Disordered" evidence="2">
    <location>
        <begin position="1"/>
        <end position="20"/>
    </location>
</feature>
<feature type="compositionally biased region" description="Gly residues" evidence="2">
    <location>
        <begin position="1"/>
        <end position="11"/>
    </location>
</feature>
<feature type="sequence conflict" description="In Ref. 3; BAF01000." evidence="4" ref="3">
    <original>S</original>
    <variation>P</variation>
    <location>
        <position position="376"/>
    </location>
</feature>
<gene>
    <name type="primary">NAT7</name>
    <name type="ordered locus">At1g60030</name>
    <name type="ORF">T2K10.8</name>
</gene>
<proteinExistence type="evidence at transcript level"/>
<evidence type="ECO:0000255" key="1"/>
<evidence type="ECO:0000256" key="2">
    <source>
        <dbReference type="SAM" id="MobiDB-lite"/>
    </source>
</evidence>
<evidence type="ECO:0000269" key="3">
    <source>
    </source>
</evidence>
<evidence type="ECO:0000305" key="4"/>
<sequence>MAGGGGGGGGVAPPLKHDGLEPHPVKDQLSSISYCITSPPPWPEAILLGFQHYLVMLGTTVLIPTYLVPQMGGGNEEKAKMVQTLLFVSGLNTLLQSFFGTRLPAVIGGSYTYVPTTLSIILAGRYSDILDPQEKFKRIMRGIQGALIVASILQIVVGFSGLWRNVVRLLSPLSAVPLVALAGFGLYEHGFPLLAKCIEIGLPEIILLLLFSQYIPHLIRGERQVFHRFAVIFSVVIVWIYAHLLTVGGAYKNTGVNTQTSCRTDRSGLISGSPWIRVPYPFQWGPPTFHAGEAFAMMAVSFVSLIESTGTYIVVSRFASATPPPPSVLSRGVGWQGVGVLLCGLFGAGNGASVSVENAGLLALTRVGSRRVVQISAGFMIFFSILGKFGAIFASIPAPVVAALHCLFFAYVGAGGLSLLQFCNLNSFRTKFILGFSVFMGLSIPQYFNQYTAVNKYGPVHTHARWFNDMINVPFSSKAFVAGILAFFLDVTMSSKDSATRKDRGMFWWDRFMSFKSDTRSEEFYSLPFNLNKYFPSV</sequence>
<accession>Q0WPE9</accession>
<accession>Q9ZUJ0</accession>
<organism>
    <name type="scientific">Arabidopsis thaliana</name>
    <name type="common">Mouse-ear cress</name>
    <dbReference type="NCBI Taxonomy" id="3702"/>
    <lineage>
        <taxon>Eukaryota</taxon>
        <taxon>Viridiplantae</taxon>
        <taxon>Streptophyta</taxon>
        <taxon>Embryophyta</taxon>
        <taxon>Tracheophyta</taxon>
        <taxon>Spermatophyta</taxon>
        <taxon>Magnoliopsida</taxon>
        <taxon>eudicotyledons</taxon>
        <taxon>Gunneridae</taxon>
        <taxon>Pentapetalae</taxon>
        <taxon>rosids</taxon>
        <taxon>malvids</taxon>
        <taxon>Brassicales</taxon>
        <taxon>Brassicaceae</taxon>
        <taxon>Camelineae</taxon>
        <taxon>Arabidopsis</taxon>
    </lineage>
</organism>
<protein>
    <recommendedName>
        <fullName>Nucleobase-ascorbate transporter 7</fullName>
        <shortName>AtNAT7</shortName>
    </recommendedName>
</protein>
<comment type="subcellular location">
    <subcellularLocation>
        <location evidence="3">Cell membrane</location>
        <topology evidence="3">Multi-pass membrane protein</topology>
    </subcellularLocation>
</comment>
<comment type="tissue specificity">
    <text evidence="3">Expressed exclusively in ovules.</text>
</comment>
<comment type="similarity">
    <text evidence="4">Belongs to the nucleobase:cation symporter-2 (NCS2) (TC 2.A.40) family.</text>
</comment>
<comment type="sequence caution" evidence="4">
    <conflict type="erroneous gene model prediction">
        <sequence resource="EMBL-CDS" id="AAD14479"/>
    </conflict>
</comment>
<dbReference type="EMBL" id="AC005966">
    <property type="protein sequence ID" value="AAD14479.1"/>
    <property type="status" value="ALT_SEQ"/>
    <property type="molecule type" value="Genomic_DNA"/>
</dbReference>
<dbReference type="EMBL" id="CP002684">
    <property type="protein sequence ID" value="AEE33651.1"/>
    <property type="molecule type" value="Genomic_DNA"/>
</dbReference>
<dbReference type="EMBL" id="AK229125">
    <property type="protein sequence ID" value="BAF01000.1"/>
    <property type="molecule type" value="mRNA"/>
</dbReference>
<dbReference type="PIR" id="F96624">
    <property type="entry name" value="F96624"/>
</dbReference>
<dbReference type="RefSeq" id="NP_176211.2">
    <property type="nucleotide sequence ID" value="NM_104695.5"/>
</dbReference>
<dbReference type="SMR" id="Q0WPE9"/>
<dbReference type="FunCoup" id="Q0WPE9">
    <property type="interactions" value="559"/>
</dbReference>
<dbReference type="STRING" id="3702.Q0WPE9"/>
<dbReference type="iPTMnet" id="Q0WPE9"/>
<dbReference type="PaxDb" id="3702-AT1G60030.1"/>
<dbReference type="ProteomicsDB" id="236811"/>
<dbReference type="EnsemblPlants" id="AT1G60030.1">
    <property type="protein sequence ID" value="AT1G60030.1"/>
    <property type="gene ID" value="AT1G60030"/>
</dbReference>
<dbReference type="GeneID" id="842297"/>
<dbReference type="Gramene" id="AT1G60030.1">
    <property type="protein sequence ID" value="AT1G60030.1"/>
    <property type="gene ID" value="AT1G60030"/>
</dbReference>
<dbReference type="KEGG" id="ath:AT1G60030"/>
<dbReference type="Araport" id="AT1G60030"/>
<dbReference type="TAIR" id="AT1G60030">
    <property type="gene designation" value="NAT7"/>
</dbReference>
<dbReference type="eggNOG" id="KOG1292">
    <property type="taxonomic scope" value="Eukaryota"/>
</dbReference>
<dbReference type="HOGENOM" id="CLU_017959_5_3_1"/>
<dbReference type="InParanoid" id="Q0WPE9"/>
<dbReference type="OMA" id="SIVWFIC"/>
<dbReference type="PhylomeDB" id="Q0WPE9"/>
<dbReference type="PRO" id="PR:Q0WPE9"/>
<dbReference type="Proteomes" id="UP000006548">
    <property type="component" value="Chromosome 1"/>
</dbReference>
<dbReference type="ExpressionAtlas" id="Q0WPE9">
    <property type="expression patterns" value="baseline and differential"/>
</dbReference>
<dbReference type="GO" id="GO:0005886">
    <property type="term" value="C:plasma membrane"/>
    <property type="evidence" value="ECO:0007005"/>
    <property type="project" value="TAIR"/>
</dbReference>
<dbReference type="GO" id="GO:0009506">
    <property type="term" value="C:plasmodesma"/>
    <property type="evidence" value="ECO:0007005"/>
    <property type="project" value="TAIR"/>
</dbReference>
<dbReference type="GO" id="GO:0022857">
    <property type="term" value="F:transmembrane transporter activity"/>
    <property type="evidence" value="ECO:0007669"/>
    <property type="project" value="InterPro"/>
</dbReference>
<dbReference type="InterPro" id="IPR006043">
    <property type="entry name" value="NCS2"/>
</dbReference>
<dbReference type="NCBIfam" id="NF037981">
    <property type="entry name" value="NCS2_1"/>
    <property type="match status" value="1"/>
</dbReference>
<dbReference type="PANTHER" id="PTHR11119">
    <property type="entry name" value="XANTHINE-URACIL / VITAMIN C PERMEASE FAMILY MEMBER"/>
    <property type="match status" value="1"/>
</dbReference>
<dbReference type="Pfam" id="PF00860">
    <property type="entry name" value="Xan_ur_permease"/>
    <property type="match status" value="1"/>
</dbReference>
<reference key="1">
    <citation type="journal article" date="2000" name="Nature">
        <title>Sequence and analysis of chromosome 1 of the plant Arabidopsis thaliana.</title>
        <authorList>
            <person name="Theologis A."/>
            <person name="Ecker J.R."/>
            <person name="Palm C.J."/>
            <person name="Federspiel N.A."/>
            <person name="Kaul S."/>
            <person name="White O."/>
            <person name="Alonso J."/>
            <person name="Altafi H."/>
            <person name="Araujo R."/>
            <person name="Bowman C.L."/>
            <person name="Brooks S.Y."/>
            <person name="Buehler E."/>
            <person name="Chan A."/>
            <person name="Chao Q."/>
            <person name="Chen H."/>
            <person name="Cheuk R.F."/>
            <person name="Chin C.W."/>
            <person name="Chung M.K."/>
            <person name="Conn L."/>
            <person name="Conway A.B."/>
            <person name="Conway A.R."/>
            <person name="Creasy T.H."/>
            <person name="Dewar K."/>
            <person name="Dunn P."/>
            <person name="Etgu P."/>
            <person name="Feldblyum T.V."/>
            <person name="Feng J.-D."/>
            <person name="Fong B."/>
            <person name="Fujii C.Y."/>
            <person name="Gill J.E."/>
            <person name="Goldsmith A.D."/>
            <person name="Haas B."/>
            <person name="Hansen N.F."/>
            <person name="Hughes B."/>
            <person name="Huizar L."/>
            <person name="Hunter J.L."/>
            <person name="Jenkins J."/>
            <person name="Johnson-Hopson C."/>
            <person name="Khan S."/>
            <person name="Khaykin E."/>
            <person name="Kim C.J."/>
            <person name="Koo H.L."/>
            <person name="Kremenetskaia I."/>
            <person name="Kurtz D.B."/>
            <person name="Kwan A."/>
            <person name="Lam B."/>
            <person name="Langin-Hooper S."/>
            <person name="Lee A."/>
            <person name="Lee J.M."/>
            <person name="Lenz C.A."/>
            <person name="Li J.H."/>
            <person name="Li Y.-P."/>
            <person name="Lin X."/>
            <person name="Liu S.X."/>
            <person name="Liu Z.A."/>
            <person name="Luros J.S."/>
            <person name="Maiti R."/>
            <person name="Marziali A."/>
            <person name="Militscher J."/>
            <person name="Miranda M."/>
            <person name="Nguyen M."/>
            <person name="Nierman W.C."/>
            <person name="Osborne B.I."/>
            <person name="Pai G."/>
            <person name="Peterson J."/>
            <person name="Pham P.K."/>
            <person name="Rizzo M."/>
            <person name="Rooney T."/>
            <person name="Rowley D."/>
            <person name="Sakano H."/>
            <person name="Salzberg S.L."/>
            <person name="Schwartz J.R."/>
            <person name="Shinn P."/>
            <person name="Southwick A.M."/>
            <person name="Sun H."/>
            <person name="Tallon L.J."/>
            <person name="Tambunga G."/>
            <person name="Toriumi M.J."/>
            <person name="Town C.D."/>
            <person name="Utterback T."/>
            <person name="Van Aken S."/>
            <person name="Vaysberg M."/>
            <person name="Vysotskaia V.S."/>
            <person name="Walker M."/>
            <person name="Wu D."/>
            <person name="Yu G."/>
            <person name="Fraser C.M."/>
            <person name="Venter J.C."/>
            <person name="Davis R.W."/>
        </authorList>
    </citation>
    <scope>NUCLEOTIDE SEQUENCE [LARGE SCALE GENOMIC DNA]</scope>
    <source>
        <strain>cv. Columbia</strain>
    </source>
</reference>
<reference key="2">
    <citation type="journal article" date="2017" name="Plant J.">
        <title>Araport11: a complete reannotation of the Arabidopsis thaliana reference genome.</title>
        <authorList>
            <person name="Cheng C.Y."/>
            <person name="Krishnakumar V."/>
            <person name="Chan A.P."/>
            <person name="Thibaud-Nissen F."/>
            <person name="Schobel S."/>
            <person name="Town C.D."/>
        </authorList>
    </citation>
    <scope>GENOME REANNOTATION</scope>
    <source>
        <strain>cv. Columbia</strain>
    </source>
</reference>
<reference key="3">
    <citation type="submission" date="2006-07" db="EMBL/GenBank/DDBJ databases">
        <title>Large-scale analysis of RIKEN Arabidopsis full-length (RAFL) cDNAs.</title>
        <authorList>
            <person name="Totoki Y."/>
            <person name="Seki M."/>
            <person name="Ishida J."/>
            <person name="Nakajima M."/>
            <person name="Enju A."/>
            <person name="Kamiya A."/>
            <person name="Narusaka M."/>
            <person name="Shin-i T."/>
            <person name="Nakagawa M."/>
            <person name="Sakamoto N."/>
            <person name="Oishi K."/>
            <person name="Kohara Y."/>
            <person name="Kobayashi M."/>
            <person name="Toyoda A."/>
            <person name="Sakaki Y."/>
            <person name="Sakurai T."/>
            <person name="Iida K."/>
            <person name="Akiyama K."/>
            <person name="Satou M."/>
            <person name="Toyoda T."/>
            <person name="Konagaya A."/>
            <person name="Carninci P."/>
            <person name="Kawai J."/>
            <person name="Hayashizaki Y."/>
            <person name="Shinozaki K."/>
        </authorList>
    </citation>
    <scope>NUCLEOTIDE SEQUENCE [LARGE SCALE MRNA]</scope>
    <source>
        <strain>cv. Columbia</strain>
    </source>
</reference>
<reference key="4">
    <citation type="journal article" date="2006" name="Plant Cell Physiol.">
        <title>Identification and expression analysis of twelve members of the nucleobase-ascorbate transporter (NAT) gene family in Arabidopsis thaliana.</title>
        <authorList>
            <person name="Maurino V.G."/>
            <person name="Grube E."/>
            <person name="Zielinski J."/>
            <person name="Schild A."/>
            <person name="Fischer K."/>
            <person name="Flugge U.-I."/>
        </authorList>
    </citation>
    <scope>GENE FAMILY</scope>
    <scope>SUBCELLULAR LOCATION</scope>
    <scope>TISSUE SPECIFICITY</scope>
</reference>
<keyword id="KW-1003">Cell membrane</keyword>
<keyword id="KW-0472">Membrane</keyword>
<keyword id="KW-1185">Reference proteome</keyword>
<keyword id="KW-0812">Transmembrane</keyword>
<keyword id="KW-1133">Transmembrane helix</keyword>
<keyword id="KW-0813">Transport</keyword>
<name>NAT7_ARATH</name>